<comment type="function">
    <text evidence="1 8 9">Hybrid PKS-NRPS synthetase; part of the gene cluster that mediates the biosynthesis of equisetin, a trans-fused decalin-containing tetramic acid with antimicrobial activity (PubMed:23614392). The PKS module of eqxS together with the enoylreductase eqxC catalyze the formation of the polyketide unit which is then conjugated to L-serine by the condensation domain of the eqxS NRPS module (PubMed:23614392). Activity of the Dieckmann cyclase domain (RED) results in release of the Dieckmann product intermediate (PubMed:18652469, PubMed:23614392). Diels-Alderase eqx3 is involved in endo-selective Diels-Alder cycloaddition to form the decalin ring, leading to the production of N-desmethylequisetin also called trichosetin (By similarity). Subsequent N-methylation is carried out by eqxD to give equisetin (PubMed:23614392).</text>
</comment>
<comment type="catalytic activity">
    <reaction evidence="8">
        <text>L-serine + 7 malonyl-CoA + acetyl-CoA + 2 S-adenosyl-L-methionine + ATP + 8 NADPH + 11 H(+) = (5S)-3-[(2E,6R,8E,10E,12E)-2,6-dimethyltetradeca-2,8,10,12-tetraenoyl]-5-(hydroxymethyl)pyrrolidine-2,4-dione + AMP + 2 S-adenosyl-L-homocysteine + 7 CO2 + diphosphate + 8 NADP(+) + 8 CoA + 6 H2O</text>
        <dbReference type="Rhea" id="RHEA:67324"/>
        <dbReference type="ChEBI" id="CHEBI:15377"/>
        <dbReference type="ChEBI" id="CHEBI:15378"/>
        <dbReference type="ChEBI" id="CHEBI:16526"/>
        <dbReference type="ChEBI" id="CHEBI:30616"/>
        <dbReference type="ChEBI" id="CHEBI:33019"/>
        <dbReference type="ChEBI" id="CHEBI:33384"/>
        <dbReference type="ChEBI" id="CHEBI:57287"/>
        <dbReference type="ChEBI" id="CHEBI:57288"/>
        <dbReference type="ChEBI" id="CHEBI:57384"/>
        <dbReference type="ChEBI" id="CHEBI:57783"/>
        <dbReference type="ChEBI" id="CHEBI:57856"/>
        <dbReference type="ChEBI" id="CHEBI:58349"/>
        <dbReference type="ChEBI" id="CHEBI:59789"/>
        <dbReference type="ChEBI" id="CHEBI:169938"/>
        <dbReference type="ChEBI" id="CHEBI:456215"/>
    </reaction>
    <physiologicalReaction direction="left-to-right" evidence="8">
        <dbReference type="Rhea" id="RHEA:67325"/>
    </physiologicalReaction>
</comment>
<comment type="pathway">
    <text evidence="9">Mycotoxin biosynthesis.</text>
</comment>
<comment type="domain">
    <text evidence="2 13">NRP synthetases are composed of discrete domains (adenylation (A), thiolation (T) or peptidyl carrier protein (PCP) and condensation (C) domains) which when grouped together are referred to as a single module. Each module is responsible for the recognition (via the A domain) and incorporation of a single amino acid into the growing peptide product (By similarity). Thus, an NRP synthetase is generally composed of one or more modules and can terminate in a thioesterase domain (TE) that releases the newly synthesized peptide from the enzyme (By similarity). Occasionally, epimerase (E) domains (responsible for l- to d-amino acid conversion) are present within the NRP synthetase (By similarity). EqxS also contains a polyketide synthase module (PKS) consisting of several catalytic domains including a ketoacyl synthase domain (KS), an acyl transferase domain (AT), a dehydratase domain (DH), a methyltransferase domain (MT), and a ketoreductase domain (KR) (PubMed:23614392). Instead of a thioesterase domain (TE), eqxS finishes with a reductase-like domain (R) for peptide release (PubMed:23614392). EqxS has the following architecture: KS-AT-DH-KR-PCP-C-A-T-R (PubMed:23614392).</text>
</comment>
<comment type="similarity">
    <text evidence="12">In the C-terminal section; belongs to the NRP synthetase family.</text>
</comment>
<accession>S4W172</accession>
<organism>
    <name type="scientific">Fusarium heterosporum</name>
    <dbReference type="NCBI Taxonomy" id="42747"/>
    <lineage>
        <taxon>Eukaryota</taxon>
        <taxon>Fungi</taxon>
        <taxon>Dikarya</taxon>
        <taxon>Ascomycota</taxon>
        <taxon>Pezizomycotina</taxon>
        <taxon>Sordariomycetes</taxon>
        <taxon>Hypocreomycetidae</taxon>
        <taxon>Hypocreales</taxon>
        <taxon>Nectriaceae</taxon>
        <taxon>Fusarium</taxon>
        <taxon>Fusarium heterosporum species complex</taxon>
    </lineage>
</organism>
<sequence length="3948" mass="435334">MDASEPIAVIGSACRFPGGSDSPSKLWELLKEPRDLLSKVPPERYNADAFYHADATHHGTANVRHSYFLSEDPSSFDNNFFNIQPGEAEAIDPQQRLLMEVVYQGLCSAGQTIEGLRGSPTAVYVGVMCDDWSGIITRDLEVFPRYGATGMARSIMSNRISYFFDWHGPSMTIDTACSSSLVAVHQAIQTLRSGESEVAIAAGANLILTPGMYVAESKLSMLSPSGRSKMWDQDVDGYARGEGIAAVVLKPLSAAIRDNDHIDCIIRATGVNQDGRTPGLTMPSATAQADLIRSTYARAGLDINKAEDRPQFFHAHGTGTPAGDPREAEAISRAFYSPDNLSKDDKLYVGSIKTIIGHTEGTAGLASLIGTSLAIQSKVIPPNMHLDVLNPKVAPFYNNLEVPTSALEWPETRSGQPRRASINSFGFGGTNAHAIIEAYEPNAAARASGTLFSPLTFSASSEPSLRFLLMSYSEHLKLNPQIPLKDLAYSLQTRRSTLAYRVAITATTAENASKQLDAIVDGEQSSSINTRQLSKSSPKILGIFTGQGTQWPRMGARLLEESPFASKRLAELDDALSSLPADDRPTWTLREMILANADRSRVAEAAISQPLCTAVQVVLVDLLSQAGIQLSAVVGHSSGEIGAAYAAGLLTARDAIRVAYYRGLYAKLAQSPNGHKGAMMAVGTTFGDAADFCELEAFQGRIQIAAKNSPSSITLSGDKDAIIEAIEIFKDEGKFARQLKVDTAYHSSHVIPCAQPYLEAMNKCGIETATATKTQWYSSVHGGQIMHADSLTTSYWVDNMTSAVLFSPAVAQAWEEGGPYDLAIEVGPHPALKTPALDTIEAISEGRPPYTGVIARGKDDVQQFSTALGFIWTHLGPGSVAFEKFESVVSGSKDRPSFIQDLPNYPFDHAKQFMSMSRVSGWFNSIQEAPHPLLGRRCHDRETSHSVQWRNVLSHKEIPWLQGHQLQGQIIFPATGYISMAVEAIKILAEPSSLGLITIEDLNITRALAFVDEDASVETLFELRILSRSENEINAEFCCYSGIPHTHTATMSLNATAQIKASLGAPTSDKLSKTAVNDFDLRPVSVDRFYDFLARLGYNYSWPFRGTTSIRRKANFATGTLEDQSGSNWEDQLMVHPGMLDSSLQTTFAAFCCPGDERLWALHLPTSFRSITINPYFTSAGIGKQNSFTYQSVAIEERKASKVLVELNLLSEEAGDTFLQIEGMELVPFSPATPANDAVLFSRFDYRLAGPDGELTAAEYSFKPEDYKMALDCERIAFYYLRRLVETITPEERANTLLHYRHLVDWAAYVVPQVSNGGNPHIPASAQNDTHDDIQQLLKKHYERVDIRLLESVGENLPQVIRDSGNILEHMTKDGMLQDVYEQGFGLNLVNQYIAHMTAQIAHRYPRMNILEIGAGTGGSTREILPRLGSAFSTYTYTDVSGGFFDMAQDRFKDCADRMIFKTFDMNISPASQGFTEGAYDLVIASNVLHATLELEDMMKHVRSFLKPGGFLIILETVNNDCLRVGLPMGSLPGWWLGAEHGRQWGPTLTLPQWDSLLSKCGFGGIDTTTPPVHKILPGHVFCAQALDERIEILRSPMDHLATLPETKSTQLAIIGGQTLKVHRMCDQISRRLSSRYTSISRFHSIEEINETGLPESCTVLSLTELDEPLFTNMTSGKLDALKILWKQGGCILWITSGSRAENPHSYMTTGVGRCMRFEYPNITLQALDIKQISDRCPELIVDHLLRLEILDKWSKELRSDELLWSLEPEIYIEEDTTIIPRLYPYEAGNARYNAERRKVIKQADTKTDRVIFAECEGKWEIQHASPLHVARELPFSSDVSTRTIRITHLSPAIVNIVPGVSVMACAGVDTASNEPVIAVTHIAESPVSIPTGWCIHLDKLDPVKTLTAVSAVLIASSILERLAKGETLVVHDTPPHVRVALDKLAKTASVAIFYTSSDEAMSKLGARYIDRRSPLRVIKASLPKSASKFIDLSQDSDKNETSKVISMCLPWDYETIDTAHLFGLRNVAQQSAFEKDVSSSLKKAFEAFNSQLNTTASTNSVSLKETSNPIVDQVRFAILDCTDTPIQASVHPIDDGRIFRADKTFLLVGLTGELGQSLCKWMVEQGARNIVLTSRRPNVSEHFLDSFTETGATVKALPMDATNRSSIEACLETIKKTSPPIAGVVNGAMVLRDALFENMPYEDFIKVLNPKVLGSQLLDEMFYDTPLDFFIFFSSTTAVMGNSGQSNYIAGNMYMNALAAQRKKRGVAASSIDISSIIGLGYVERAEDLSEDTFIKMGYKPMSEQDLQKLFAEAIVLGRPDCHEVCELVTGVTPIYTDAQASDQYLKDVKFGHFLMERLDTQAYTGKTSTVPVRVQLADVKIRADAVAIIKESFIVRLRRVLAVGPDEVINEKVTLVEQGVDSLMAVEVRSWFIKELDVDIPVLKILGGMSVPDLVDECLDLLSPSILDVSSLEAGNAQAAKPTTVIPQTPTRVTPPESSQGTSDQDKPYTGSDSSHSPIGTPLTSWDRQDSSPPDKSDDAPNSTDILAPPRTFPNELSSIMSYGQAGFWFLNDYLVNKKAFNMAVMLKLTGPIRTQPLEKAVKLVAERHEILRTRFFWSEDGDERTPMQGINPPEMKLTVKTIADEEEAETELEHLHEENWELSSGEGVKVILLRLSDQVHFLLSGMHHIYLDGYSFSVFFKDLESAYINHRLPPLPVESQYRTFALQQRKAYEDGDLLKSIEYYRQNFPQEFAPIRPFPFASTGSRQLANEYSQHEAKLSIAPDVSAKIRQLARANRSTSFHVYLAALKILLFSLLPDAEELFIGIADANRGDKKFMGSLGFFLNVLPLRFQRGKPRSRVSSAIQSARDAVYGALQHSHLPFDVLLRELNVPRSDKHTPIFQVFMDYRQVVQERSSWGGCKLSDEKWCNAGTGYDIALEVTENINTDTLLSLRLQKQLYSEEHTQVLLRSYLNVLEYMIRGSDKTVDAAPAWSDHDLQVAVDAGKAPDYESKWQPTVSHQIDQVIQDNPDNIALKDGNGNVLTYVQMGNRIDAISKALIDAGTVQGTVVGVFQEPSTDWICSLLAIFKAGAVYVPLDLRNSIPRLASIVKASRPSVIITDSTTDEKVESIGAKFVTKLQLDGLNPMIHHDSIEINHAKAGYLAVILFTSGSTGEPKGLMMTHTNLLAYAEVSSKTFARADEDLVVLQQSPFSFDFSLDQTMAALTNGGCLYVVPASKRGDPDEISKIMVEESVTYTTATPSEYDLWLRYSAETLRQCTSWKYAFSGGEAMSYKLAREFGTLKLRNLHVFNGYGPAETTILSHRIDLKYTDPDLPDPLPAGYPLPGFAVCIVDNKMRPVPPGVQGEIVLGGPCIVSGYLNMPESTRDKFLPDTFFGTSGTVYRSGDRGRLCQDGLLFCDGRLEGNRMIKLRGFRVELDEVEKTIVSHSAGALSHAVVTVRGAEEGRYLVAHVVFAPDFPEKDREGTMRSLRQTLPLPPYMRPSAFQVLTDIPRTAHLKIDRKAIQDIPVQTTQSEVSEILTPSEQRLSELWRRVLPLDPGTLTHESDFFLIGGNSILLVKLQTLLRQVSWTAPKLVTLMGSSTLGAMAGVLEDCGPVNIIHWDEETKFPQDLQLTTPLRAAGKSTDITVLLTGSSGYLGRHLLSSLLNDHRVAQVHCLCRNLNDHQVVENPSSKVRVLQSDLAQHKLGLPDSTYSQLATEVDVIIHCAANRSFWDRYEALKADNLESTKELVKLVVSSGRAIPLHFLSSGAVIKYNSGLAPPADGGDGYVATKWASEAFLRQAVDSINLPVFSHRPVACESVQQSEEEDISILNELIQIVKLLGCRPSFDGVGGFVDVMPVNEVVEAIHKTGLNSQTEEGFCILEHKAHQRAYVKSFAAAVESDSDLSKIPCIPILEWFGRTKKAGFSYFLASQDLILGSQLFSRR</sequence>
<feature type="chain" id="PRO_0000441289" description="Equisetin synthetase eqxS">
    <location>
        <begin position="1"/>
        <end position="3948"/>
    </location>
</feature>
<feature type="domain" description="Ketosynthase family 3 (KS3)" evidence="5 13">
    <location>
        <begin position="4"/>
        <end position="438"/>
    </location>
</feature>
<feature type="domain" description="PKS/mFAS DH" evidence="6">
    <location>
        <begin position="931"/>
        <end position="1235"/>
    </location>
</feature>
<feature type="domain" description="Carrier 1" evidence="4">
    <location>
        <begin position="2389"/>
        <end position="2464"/>
    </location>
</feature>
<feature type="domain" description="Carrier 2" evidence="4">
    <location>
        <begin position="3540"/>
        <end position="3617"/>
    </location>
</feature>
<feature type="region of interest" description="Malonyl-CoA:ACP transacylase (MAT) domain" evidence="3 13">
    <location>
        <begin position="543"/>
        <end position="847"/>
    </location>
</feature>
<feature type="region of interest" description="Dehydratase (DH) domain" evidence="3 13">
    <location>
        <begin position="931"/>
        <end position="1233"/>
    </location>
</feature>
<feature type="region of interest" description="N-terminal hotdog fold" evidence="6">
    <location>
        <begin position="931"/>
        <end position="1066"/>
    </location>
</feature>
<feature type="region of interest" description="C-terminal hotdog fold" evidence="6">
    <location>
        <begin position="1081"/>
        <end position="1235"/>
    </location>
</feature>
<feature type="region of interest" description="Methyltransferase (MT) domain" evidence="3 13">
    <location>
        <begin position="1376"/>
        <end position="1574"/>
    </location>
</feature>
<feature type="region of interest" description="Ketoreductase (KR) domain" evidence="3 13">
    <location>
        <begin position="2105"/>
        <end position="2277"/>
    </location>
</feature>
<feature type="region of interest" description="Disordered" evidence="7">
    <location>
        <begin position="2480"/>
        <end position="2553"/>
    </location>
</feature>
<feature type="region of interest" description="Condensation (C) domain" evidence="3 13">
    <location>
        <begin position="2564"/>
        <end position="2991"/>
    </location>
</feature>
<feature type="region of interest" description="Adenylation (A) (KR) domain" evidence="3 13">
    <location>
        <begin position="3026"/>
        <end position="3424"/>
    </location>
</feature>
<feature type="region of interest" description="Reductase (RED) domain" evidence="3 13">
    <location>
        <begin position="3653"/>
        <end position="3870"/>
    </location>
</feature>
<feature type="compositionally biased region" description="Polar residues" evidence="7">
    <location>
        <begin position="2487"/>
        <end position="2505"/>
    </location>
</feature>
<feature type="compositionally biased region" description="Polar residues" evidence="7">
    <location>
        <begin position="2513"/>
        <end position="2528"/>
    </location>
</feature>
<feature type="compositionally biased region" description="Basic and acidic residues" evidence="7">
    <location>
        <begin position="2529"/>
        <end position="2541"/>
    </location>
</feature>
<feature type="active site" description="For beta-ketoacyl synthase activity" evidence="5">
    <location>
        <position position="177"/>
    </location>
</feature>
<feature type="active site" description="For beta-ketoacyl synthase activity" evidence="5">
    <location>
        <position position="316"/>
    </location>
</feature>
<feature type="active site" description="For beta-ketoacyl synthase activity" evidence="5">
    <location>
        <position position="358"/>
    </location>
</feature>
<feature type="active site" description="Proton acceptor; for dehydratase activity" evidence="6">
    <location>
        <position position="964"/>
    </location>
</feature>
<feature type="active site" description="Proton donor; for dehydratase activity" evidence="6">
    <location>
        <position position="1141"/>
    </location>
</feature>
<feature type="modified residue" description="O-(pantetheine 4'-phosphoryl)serine" evidence="4">
    <location>
        <position position="2424"/>
    </location>
</feature>
<feature type="modified residue" description="O-(pantetheine 4'-phosphoryl)serine" evidence="4">
    <location>
        <position position="3577"/>
    </location>
</feature>
<reference key="1">
    <citation type="journal article" date="2013" name="ACS Chem. Biol.">
        <title>Two related pyrrolidinedione synthetase loci in Fusarium heterosporum ATCC 74349 produce divergent metabolites.</title>
        <authorList>
            <person name="Kakule T.B."/>
            <person name="Sardar D."/>
            <person name="Lin Z."/>
            <person name="Schmidt E.W."/>
        </authorList>
    </citation>
    <scope>NUCLEOTIDE SEQUENCE [GENOMIC DNA]</scope>
    <scope>FUNCTION</scope>
    <scope>DOMAIN</scope>
    <scope>PATHWAY</scope>
    <source>
        <strain>ATCC 74349 / MF6069</strain>
    </source>
</reference>
<reference key="2">
    <citation type="journal article" date="2008" name="J. Am. Chem. Soc.">
        <title>Thioesterase-like role for fungal PKS-NRPS hybrid reductive domains.</title>
        <authorList>
            <person name="Sims J.W."/>
            <person name="Schmidt E.W."/>
        </authorList>
    </citation>
    <scope>FUNCTION</scope>
    <scope>CATALYTIC ACTIVITY</scope>
    <scope>DOMAIN</scope>
</reference>
<keyword id="KW-0436">Ligase</keyword>
<keyword id="KW-0489">Methyltransferase</keyword>
<keyword id="KW-0511">Multifunctional enzyme</keyword>
<keyword id="KW-0560">Oxidoreductase</keyword>
<keyword id="KW-0596">Phosphopantetheine</keyword>
<keyword id="KW-0597">Phosphoprotein</keyword>
<keyword id="KW-0677">Repeat</keyword>
<keyword id="KW-0808">Transferase</keyword>
<dbReference type="EC" id="2.3.1.-" evidence="8"/>
<dbReference type="EC" id="6.3.2.-" evidence="8"/>
<dbReference type="EMBL" id="KC439347">
    <property type="protein sequence ID" value="AGO86662.1"/>
    <property type="molecule type" value="Genomic_DNA"/>
</dbReference>
<dbReference type="SMR" id="S4W172"/>
<dbReference type="BioCyc" id="MetaCyc:MONOMER-19331"/>
<dbReference type="GO" id="GO:0004315">
    <property type="term" value="F:3-oxoacyl-[acyl-carrier-protein] synthase activity"/>
    <property type="evidence" value="ECO:0007669"/>
    <property type="project" value="InterPro"/>
</dbReference>
<dbReference type="GO" id="GO:0004312">
    <property type="term" value="F:fatty acid synthase activity"/>
    <property type="evidence" value="ECO:0007669"/>
    <property type="project" value="TreeGrafter"/>
</dbReference>
<dbReference type="GO" id="GO:0016874">
    <property type="term" value="F:ligase activity"/>
    <property type="evidence" value="ECO:0007669"/>
    <property type="project" value="UniProtKB-KW"/>
</dbReference>
<dbReference type="GO" id="GO:0008168">
    <property type="term" value="F:methyltransferase activity"/>
    <property type="evidence" value="ECO:0007669"/>
    <property type="project" value="UniProtKB-KW"/>
</dbReference>
<dbReference type="GO" id="GO:0016491">
    <property type="term" value="F:oxidoreductase activity"/>
    <property type="evidence" value="ECO:0007669"/>
    <property type="project" value="UniProtKB-KW"/>
</dbReference>
<dbReference type="GO" id="GO:0031177">
    <property type="term" value="F:phosphopantetheine binding"/>
    <property type="evidence" value="ECO:0007669"/>
    <property type="project" value="InterPro"/>
</dbReference>
<dbReference type="GO" id="GO:0006633">
    <property type="term" value="P:fatty acid biosynthetic process"/>
    <property type="evidence" value="ECO:0007669"/>
    <property type="project" value="InterPro"/>
</dbReference>
<dbReference type="GO" id="GO:0032259">
    <property type="term" value="P:methylation"/>
    <property type="evidence" value="ECO:0007669"/>
    <property type="project" value="UniProtKB-KW"/>
</dbReference>
<dbReference type="GO" id="GO:0009403">
    <property type="term" value="P:toxin biosynthetic process"/>
    <property type="evidence" value="ECO:0007669"/>
    <property type="project" value="UniProtKB-ARBA"/>
</dbReference>
<dbReference type="CDD" id="cd05930">
    <property type="entry name" value="A_NRPS"/>
    <property type="match status" value="1"/>
</dbReference>
<dbReference type="CDD" id="cd02440">
    <property type="entry name" value="AdoMet_MTases"/>
    <property type="match status" value="1"/>
</dbReference>
<dbReference type="CDD" id="cd19532">
    <property type="entry name" value="C_PKS-NRPS"/>
    <property type="match status" value="1"/>
</dbReference>
<dbReference type="CDD" id="cd00833">
    <property type="entry name" value="PKS"/>
    <property type="match status" value="1"/>
</dbReference>
<dbReference type="Gene3D" id="3.30.300.30">
    <property type="match status" value="1"/>
</dbReference>
<dbReference type="Gene3D" id="3.30.70.3290">
    <property type="match status" value="1"/>
</dbReference>
<dbReference type="Gene3D" id="3.40.47.10">
    <property type="match status" value="1"/>
</dbReference>
<dbReference type="Gene3D" id="1.10.1200.10">
    <property type="entry name" value="ACP-like"/>
    <property type="match status" value="2"/>
</dbReference>
<dbReference type="Gene3D" id="3.30.559.10">
    <property type="entry name" value="Chloramphenicol acetyltransferase-like domain"/>
    <property type="match status" value="1"/>
</dbReference>
<dbReference type="Gene3D" id="3.40.366.10">
    <property type="entry name" value="Malonyl-Coenzyme A Acyl Carrier Protein, domain 2"/>
    <property type="match status" value="1"/>
</dbReference>
<dbReference type="Gene3D" id="3.40.50.12780">
    <property type="entry name" value="N-terminal domain of ligase-like"/>
    <property type="match status" value="1"/>
</dbReference>
<dbReference type="Gene3D" id="3.40.50.720">
    <property type="entry name" value="NAD(P)-binding Rossmann-like Domain"/>
    <property type="match status" value="2"/>
</dbReference>
<dbReference type="Gene3D" id="3.30.559.30">
    <property type="entry name" value="Nonribosomal peptide synthetase, condensation domain"/>
    <property type="match status" value="1"/>
</dbReference>
<dbReference type="Gene3D" id="3.10.129.110">
    <property type="entry name" value="Polyketide synthase dehydratase"/>
    <property type="match status" value="1"/>
</dbReference>
<dbReference type="Gene3D" id="3.40.50.150">
    <property type="entry name" value="Vaccinia Virus protein VP39"/>
    <property type="match status" value="1"/>
</dbReference>
<dbReference type="InterPro" id="IPR001227">
    <property type="entry name" value="Ac_transferase_dom_sf"/>
</dbReference>
<dbReference type="InterPro" id="IPR036736">
    <property type="entry name" value="ACP-like_sf"/>
</dbReference>
<dbReference type="InterPro" id="IPR014043">
    <property type="entry name" value="Acyl_transferase_dom"/>
</dbReference>
<dbReference type="InterPro" id="IPR016035">
    <property type="entry name" value="Acyl_Trfase/lysoPLipase"/>
</dbReference>
<dbReference type="InterPro" id="IPR045851">
    <property type="entry name" value="AMP-bd_C_sf"/>
</dbReference>
<dbReference type="InterPro" id="IPR020845">
    <property type="entry name" value="AMP-binding_CS"/>
</dbReference>
<dbReference type="InterPro" id="IPR000873">
    <property type="entry name" value="AMP-dep_synth/lig_dom"/>
</dbReference>
<dbReference type="InterPro" id="IPR042099">
    <property type="entry name" value="ANL_N_sf"/>
</dbReference>
<dbReference type="InterPro" id="IPR023213">
    <property type="entry name" value="CAT-like_dom_sf"/>
</dbReference>
<dbReference type="InterPro" id="IPR001242">
    <property type="entry name" value="Condensatn"/>
</dbReference>
<dbReference type="InterPro" id="IPR013120">
    <property type="entry name" value="Far_NAD-bd"/>
</dbReference>
<dbReference type="InterPro" id="IPR018201">
    <property type="entry name" value="Ketoacyl_synth_AS"/>
</dbReference>
<dbReference type="InterPro" id="IPR014031">
    <property type="entry name" value="Ketoacyl_synth_C"/>
</dbReference>
<dbReference type="InterPro" id="IPR014030">
    <property type="entry name" value="Ketoacyl_synth_N"/>
</dbReference>
<dbReference type="InterPro" id="IPR016036">
    <property type="entry name" value="Malonyl_transacylase_ACP-bd"/>
</dbReference>
<dbReference type="InterPro" id="IPR013217">
    <property type="entry name" value="Methyltransf_12"/>
</dbReference>
<dbReference type="InterPro" id="IPR036291">
    <property type="entry name" value="NAD(P)-bd_dom_sf"/>
</dbReference>
<dbReference type="InterPro" id="IPR020841">
    <property type="entry name" value="PKS_Beta-ketoAc_synthase_dom"/>
</dbReference>
<dbReference type="InterPro" id="IPR042104">
    <property type="entry name" value="PKS_dehydratase_sf"/>
</dbReference>
<dbReference type="InterPro" id="IPR020807">
    <property type="entry name" value="PKS_DH"/>
</dbReference>
<dbReference type="InterPro" id="IPR049551">
    <property type="entry name" value="PKS_DH_C"/>
</dbReference>
<dbReference type="InterPro" id="IPR049552">
    <property type="entry name" value="PKS_DH_N"/>
</dbReference>
<dbReference type="InterPro" id="IPR013968">
    <property type="entry name" value="PKS_KR"/>
</dbReference>
<dbReference type="InterPro" id="IPR049900">
    <property type="entry name" value="PKS_mFAS_DH"/>
</dbReference>
<dbReference type="InterPro" id="IPR050091">
    <property type="entry name" value="PKS_NRPS_Biosynth_Enz"/>
</dbReference>
<dbReference type="InterPro" id="IPR020806">
    <property type="entry name" value="PKS_PP-bd"/>
</dbReference>
<dbReference type="InterPro" id="IPR009081">
    <property type="entry name" value="PP-bd_ACP"/>
</dbReference>
<dbReference type="InterPro" id="IPR029063">
    <property type="entry name" value="SAM-dependent_MTases_sf"/>
</dbReference>
<dbReference type="InterPro" id="IPR016039">
    <property type="entry name" value="Thiolase-like"/>
</dbReference>
<dbReference type="PANTHER" id="PTHR43775">
    <property type="entry name" value="FATTY ACID SYNTHASE"/>
    <property type="match status" value="1"/>
</dbReference>
<dbReference type="PANTHER" id="PTHR43775:SF20">
    <property type="entry name" value="HYBRID PKS-NRPS SYNTHETASE APDA"/>
    <property type="match status" value="1"/>
</dbReference>
<dbReference type="Pfam" id="PF00698">
    <property type="entry name" value="Acyl_transf_1"/>
    <property type="match status" value="1"/>
</dbReference>
<dbReference type="Pfam" id="PF00501">
    <property type="entry name" value="AMP-binding"/>
    <property type="match status" value="1"/>
</dbReference>
<dbReference type="Pfam" id="PF00668">
    <property type="entry name" value="Condensation"/>
    <property type="match status" value="1"/>
</dbReference>
<dbReference type="Pfam" id="PF22621">
    <property type="entry name" value="CurL-like_PKS_C"/>
    <property type="match status" value="1"/>
</dbReference>
<dbReference type="Pfam" id="PF00109">
    <property type="entry name" value="ketoacyl-synt"/>
    <property type="match status" value="1"/>
</dbReference>
<dbReference type="Pfam" id="PF02801">
    <property type="entry name" value="Ketoacyl-synt_C"/>
    <property type="match status" value="1"/>
</dbReference>
<dbReference type="Pfam" id="PF08659">
    <property type="entry name" value="KR"/>
    <property type="match status" value="1"/>
</dbReference>
<dbReference type="Pfam" id="PF08242">
    <property type="entry name" value="Methyltransf_12"/>
    <property type="match status" value="1"/>
</dbReference>
<dbReference type="Pfam" id="PF07993">
    <property type="entry name" value="NAD_binding_4"/>
    <property type="match status" value="1"/>
</dbReference>
<dbReference type="Pfam" id="PF21089">
    <property type="entry name" value="PKS_DH_N"/>
    <property type="match status" value="1"/>
</dbReference>
<dbReference type="Pfam" id="PF00550">
    <property type="entry name" value="PP-binding"/>
    <property type="match status" value="2"/>
</dbReference>
<dbReference type="Pfam" id="PF14765">
    <property type="entry name" value="PS-DH"/>
    <property type="match status" value="1"/>
</dbReference>
<dbReference type="SMART" id="SM00827">
    <property type="entry name" value="PKS_AT"/>
    <property type="match status" value="1"/>
</dbReference>
<dbReference type="SMART" id="SM00826">
    <property type="entry name" value="PKS_DH"/>
    <property type="match status" value="1"/>
</dbReference>
<dbReference type="SMART" id="SM00822">
    <property type="entry name" value="PKS_KR"/>
    <property type="match status" value="1"/>
</dbReference>
<dbReference type="SMART" id="SM00825">
    <property type="entry name" value="PKS_KS"/>
    <property type="match status" value="1"/>
</dbReference>
<dbReference type="SMART" id="SM00823">
    <property type="entry name" value="PKS_PP"/>
    <property type="match status" value="1"/>
</dbReference>
<dbReference type="SUPFAM" id="SSF56801">
    <property type="entry name" value="Acetyl-CoA synthetase-like"/>
    <property type="match status" value="1"/>
</dbReference>
<dbReference type="SUPFAM" id="SSF47336">
    <property type="entry name" value="ACP-like"/>
    <property type="match status" value="2"/>
</dbReference>
<dbReference type="SUPFAM" id="SSF52777">
    <property type="entry name" value="CoA-dependent acyltransferases"/>
    <property type="match status" value="2"/>
</dbReference>
<dbReference type="SUPFAM" id="SSF52151">
    <property type="entry name" value="FabD/lysophospholipase-like"/>
    <property type="match status" value="1"/>
</dbReference>
<dbReference type="SUPFAM" id="SSF51735">
    <property type="entry name" value="NAD(P)-binding Rossmann-fold domains"/>
    <property type="match status" value="2"/>
</dbReference>
<dbReference type="SUPFAM" id="SSF55048">
    <property type="entry name" value="Probable ACP-binding domain of malonyl-CoA ACP transacylase"/>
    <property type="match status" value="1"/>
</dbReference>
<dbReference type="SUPFAM" id="SSF53335">
    <property type="entry name" value="S-adenosyl-L-methionine-dependent methyltransferases"/>
    <property type="match status" value="1"/>
</dbReference>
<dbReference type="SUPFAM" id="SSF53901">
    <property type="entry name" value="Thiolase-like"/>
    <property type="match status" value="1"/>
</dbReference>
<dbReference type="PROSITE" id="PS00455">
    <property type="entry name" value="AMP_BINDING"/>
    <property type="match status" value="1"/>
</dbReference>
<dbReference type="PROSITE" id="PS50075">
    <property type="entry name" value="CARRIER"/>
    <property type="match status" value="2"/>
</dbReference>
<dbReference type="PROSITE" id="PS00606">
    <property type="entry name" value="KS3_1"/>
    <property type="match status" value="1"/>
</dbReference>
<dbReference type="PROSITE" id="PS52004">
    <property type="entry name" value="KS3_2"/>
    <property type="match status" value="1"/>
</dbReference>
<dbReference type="PROSITE" id="PS52019">
    <property type="entry name" value="PKS_MFAS_DH"/>
    <property type="match status" value="1"/>
</dbReference>
<gene>
    <name evidence="11" type="primary">eqxS</name>
    <name evidence="10" type="synonym">eqiS</name>
</gene>
<proteinExistence type="evidence at protein level"/>
<name>EQXS_FUSHE</name>
<evidence type="ECO:0000250" key="1">
    <source>
        <dbReference type="UniProtKB" id="A0A0E4AZP0"/>
    </source>
</evidence>
<evidence type="ECO:0000250" key="2">
    <source>
        <dbReference type="UniProtKB" id="Q4WAZ9"/>
    </source>
</evidence>
<evidence type="ECO:0000255" key="3"/>
<evidence type="ECO:0000255" key="4">
    <source>
        <dbReference type="PROSITE-ProRule" id="PRU00258"/>
    </source>
</evidence>
<evidence type="ECO:0000255" key="5">
    <source>
        <dbReference type="PROSITE-ProRule" id="PRU01348"/>
    </source>
</evidence>
<evidence type="ECO:0000255" key="6">
    <source>
        <dbReference type="PROSITE-ProRule" id="PRU01363"/>
    </source>
</evidence>
<evidence type="ECO:0000256" key="7">
    <source>
        <dbReference type="SAM" id="MobiDB-lite"/>
    </source>
</evidence>
<evidence type="ECO:0000269" key="8">
    <source>
    </source>
</evidence>
<evidence type="ECO:0000269" key="9">
    <source>
    </source>
</evidence>
<evidence type="ECO:0000303" key="10">
    <source>
    </source>
</evidence>
<evidence type="ECO:0000303" key="11">
    <source>
    </source>
</evidence>
<evidence type="ECO:0000305" key="12"/>
<evidence type="ECO:0000305" key="13">
    <source>
    </source>
</evidence>
<protein>
    <recommendedName>
        <fullName evidence="11">Equisetin synthetase eqxS</fullName>
        <ecNumber evidence="8">2.3.1.-</ecNumber>
        <ecNumber evidence="8">6.3.2.-</ecNumber>
    </recommendedName>
    <alternativeName>
        <fullName evidence="11">Equisetin biosynthesis protein S</fullName>
    </alternativeName>
    <alternativeName>
        <fullName evidence="11">Hybrid PKS-NRPS synthetase eqxS</fullName>
    </alternativeName>
</protein>